<accession>Q3B399</accession>
<comment type="subcellular location">
    <subcellularLocation>
        <location evidence="1">Cell inner membrane</location>
        <topology evidence="1">Multi-pass membrane protein</topology>
    </subcellularLocation>
</comment>
<comment type="similarity">
    <text evidence="1">Belongs to the UPF0761 family.</text>
</comment>
<sequence length="427" mass="47417">MAPGSNGIMDGMHRRIGEAGAFFRSFVPFFLQNVRHDRIFLSAGSLAFQTLLSIVPLLAVVLSILNVFAVFAPLQPYVEDFIVHNFVPGTGGMIREYFSGFIGNTFTMPIFGALFLFIVALVLISTVDHTLNEIWEVHSPRKVLQGFTLYWTVLTLGPVLLATSLAASSFVWYTVFTEGPLLELKTRLLSLLPSTITVLALLLLYLLVPNRRVRFLHALSGALVATLLFEVSKRWFAFYVANVATFEHIYGALSVIPMLFFWIYLGWVVVLTGAEIVYCLGARRLSGPAAPEFDPLRGVPLMLAVLRMVWRAGGEGVVLDMKKILREFHRENPSSLRKIVDILLECRFMHLTASGGMAAASDLHVMTLYDLFIKLPPDFGAEDFGQAGPAWDGIELQGVRERLGACFEESMHVPLIQLMDGSNEGQV</sequence>
<feature type="chain" id="PRO_0000391043" description="UPF0761 membrane protein Plut_1323">
    <location>
        <begin position="1"/>
        <end position="427"/>
    </location>
</feature>
<feature type="transmembrane region" description="Helical" evidence="1">
    <location>
        <begin position="51"/>
        <end position="71"/>
    </location>
</feature>
<feature type="transmembrane region" description="Helical" evidence="1">
    <location>
        <begin position="105"/>
        <end position="125"/>
    </location>
</feature>
<feature type="transmembrane region" description="Helical" evidence="1">
    <location>
        <begin position="147"/>
        <end position="167"/>
    </location>
</feature>
<feature type="transmembrane region" description="Helical" evidence="1">
    <location>
        <begin position="188"/>
        <end position="208"/>
    </location>
</feature>
<feature type="transmembrane region" description="Helical" evidence="1">
    <location>
        <begin position="221"/>
        <end position="241"/>
    </location>
</feature>
<feature type="transmembrane region" description="Helical" evidence="1">
    <location>
        <begin position="251"/>
        <end position="271"/>
    </location>
</feature>
<evidence type="ECO:0000255" key="1">
    <source>
        <dbReference type="HAMAP-Rule" id="MF_00672"/>
    </source>
</evidence>
<gene>
    <name type="ordered locus">Plut_1323</name>
</gene>
<reference key="1">
    <citation type="submission" date="2005-08" db="EMBL/GenBank/DDBJ databases">
        <title>Complete sequence of Pelodictyon luteolum DSM 273.</title>
        <authorList>
            <consortium name="US DOE Joint Genome Institute"/>
            <person name="Copeland A."/>
            <person name="Lucas S."/>
            <person name="Lapidus A."/>
            <person name="Barry K."/>
            <person name="Detter J.C."/>
            <person name="Glavina T."/>
            <person name="Hammon N."/>
            <person name="Israni S."/>
            <person name="Pitluck S."/>
            <person name="Bryant D."/>
            <person name="Schmutz J."/>
            <person name="Larimer F."/>
            <person name="Land M."/>
            <person name="Kyrpides N."/>
            <person name="Ivanova N."/>
            <person name="Richardson P."/>
        </authorList>
    </citation>
    <scope>NUCLEOTIDE SEQUENCE [LARGE SCALE GENOMIC DNA]</scope>
    <source>
        <strain>DSM 273 / BCRC 81028 / 2530</strain>
    </source>
</reference>
<keyword id="KW-0997">Cell inner membrane</keyword>
<keyword id="KW-1003">Cell membrane</keyword>
<keyword id="KW-0472">Membrane</keyword>
<keyword id="KW-1185">Reference proteome</keyword>
<keyword id="KW-0812">Transmembrane</keyword>
<keyword id="KW-1133">Transmembrane helix</keyword>
<dbReference type="EMBL" id="CP000096">
    <property type="protein sequence ID" value="ABB24182.1"/>
    <property type="molecule type" value="Genomic_DNA"/>
</dbReference>
<dbReference type="RefSeq" id="WP_011358054.1">
    <property type="nucleotide sequence ID" value="NC_007512.1"/>
</dbReference>
<dbReference type="SMR" id="Q3B399"/>
<dbReference type="STRING" id="319225.Plut_1323"/>
<dbReference type="KEGG" id="plt:Plut_1323"/>
<dbReference type="eggNOG" id="COG1295">
    <property type="taxonomic scope" value="Bacteria"/>
</dbReference>
<dbReference type="HOGENOM" id="CLU_032288_1_0_10"/>
<dbReference type="OrthoDB" id="9808671at2"/>
<dbReference type="Proteomes" id="UP000002709">
    <property type="component" value="Chromosome"/>
</dbReference>
<dbReference type="GO" id="GO:0005886">
    <property type="term" value="C:plasma membrane"/>
    <property type="evidence" value="ECO:0007669"/>
    <property type="project" value="UniProtKB-SubCell"/>
</dbReference>
<dbReference type="HAMAP" id="MF_00672">
    <property type="entry name" value="UPF0761"/>
    <property type="match status" value="1"/>
</dbReference>
<dbReference type="InterPro" id="IPR023679">
    <property type="entry name" value="UPF0761_bac"/>
</dbReference>
<dbReference type="InterPro" id="IPR017039">
    <property type="entry name" value="Virul_fac_BrkB"/>
</dbReference>
<dbReference type="NCBIfam" id="TIGR00765">
    <property type="entry name" value="yihY_not_rbn"/>
    <property type="match status" value="1"/>
</dbReference>
<dbReference type="PANTHER" id="PTHR30213">
    <property type="entry name" value="INNER MEMBRANE PROTEIN YHJD"/>
    <property type="match status" value="1"/>
</dbReference>
<dbReference type="PANTHER" id="PTHR30213:SF0">
    <property type="entry name" value="UPF0761 MEMBRANE PROTEIN YIHY"/>
    <property type="match status" value="1"/>
</dbReference>
<dbReference type="Pfam" id="PF03631">
    <property type="entry name" value="Virul_fac_BrkB"/>
    <property type="match status" value="1"/>
</dbReference>
<protein>
    <recommendedName>
        <fullName evidence="1">UPF0761 membrane protein Plut_1323</fullName>
    </recommendedName>
</protein>
<proteinExistence type="inferred from homology"/>
<name>Y1323_CHLL3</name>
<organism>
    <name type="scientific">Chlorobium luteolum (strain DSM 273 / BCRC 81028 / 2530)</name>
    <name type="common">Pelodictyon luteolum</name>
    <dbReference type="NCBI Taxonomy" id="319225"/>
    <lineage>
        <taxon>Bacteria</taxon>
        <taxon>Pseudomonadati</taxon>
        <taxon>Chlorobiota</taxon>
        <taxon>Chlorobiia</taxon>
        <taxon>Chlorobiales</taxon>
        <taxon>Chlorobiaceae</taxon>
        <taxon>Chlorobium/Pelodictyon group</taxon>
        <taxon>Pelodictyon</taxon>
    </lineage>
</organism>